<keyword id="KW-0249">Electron transport</keyword>
<keyword id="KW-0349">Heme</keyword>
<keyword id="KW-0408">Iron</keyword>
<keyword id="KW-0472">Membrane</keyword>
<keyword id="KW-0479">Metal-binding</keyword>
<keyword id="KW-0496">Mitochondrion</keyword>
<keyword id="KW-0999">Mitochondrion inner membrane</keyword>
<keyword id="KW-0679">Respiratory chain</keyword>
<keyword id="KW-0812">Transmembrane</keyword>
<keyword id="KW-1133">Transmembrane helix</keyword>
<keyword id="KW-0813">Transport</keyword>
<keyword id="KW-0830">Ubiquinone</keyword>
<feature type="chain" id="PRO_0000254701" description="Cytochrome b">
    <location>
        <begin position="1"/>
        <end position="379"/>
    </location>
</feature>
<feature type="transmembrane region" description="Helical" evidence="2">
    <location>
        <begin position="33"/>
        <end position="53"/>
    </location>
</feature>
<feature type="transmembrane region" description="Helical" evidence="2">
    <location>
        <begin position="77"/>
        <end position="98"/>
    </location>
</feature>
<feature type="transmembrane region" description="Helical" evidence="2">
    <location>
        <begin position="113"/>
        <end position="133"/>
    </location>
</feature>
<feature type="transmembrane region" description="Helical" evidence="2">
    <location>
        <begin position="178"/>
        <end position="198"/>
    </location>
</feature>
<feature type="transmembrane region" description="Helical" evidence="2">
    <location>
        <begin position="226"/>
        <end position="246"/>
    </location>
</feature>
<feature type="transmembrane region" description="Helical" evidence="2">
    <location>
        <begin position="288"/>
        <end position="308"/>
    </location>
</feature>
<feature type="transmembrane region" description="Helical" evidence="2">
    <location>
        <begin position="320"/>
        <end position="340"/>
    </location>
</feature>
<feature type="transmembrane region" description="Helical" evidence="2">
    <location>
        <begin position="347"/>
        <end position="367"/>
    </location>
</feature>
<feature type="binding site" description="axial binding residue" evidence="2">
    <location>
        <position position="83"/>
    </location>
    <ligand>
        <name>heme b</name>
        <dbReference type="ChEBI" id="CHEBI:60344"/>
        <label>b562</label>
    </ligand>
    <ligandPart>
        <name>Fe</name>
        <dbReference type="ChEBI" id="CHEBI:18248"/>
    </ligandPart>
</feature>
<feature type="binding site" description="axial binding residue" evidence="2">
    <location>
        <position position="97"/>
    </location>
    <ligand>
        <name>heme b</name>
        <dbReference type="ChEBI" id="CHEBI:60344"/>
        <label>b566</label>
    </ligand>
    <ligandPart>
        <name>Fe</name>
        <dbReference type="ChEBI" id="CHEBI:18248"/>
    </ligandPart>
</feature>
<feature type="binding site" description="axial binding residue" evidence="2">
    <location>
        <position position="182"/>
    </location>
    <ligand>
        <name>heme b</name>
        <dbReference type="ChEBI" id="CHEBI:60344"/>
        <label>b562</label>
    </ligand>
    <ligandPart>
        <name>Fe</name>
        <dbReference type="ChEBI" id="CHEBI:18248"/>
    </ligandPart>
</feature>
<feature type="binding site" description="axial binding residue" evidence="2">
    <location>
        <position position="196"/>
    </location>
    <ligand>
        <name>heme b</name>
        <dbReference type="ChEBI" id="CHEBI:60344"/>
        <label>b566</label>
    </ligand>
    <ligandPart>
        <name>Fe</name>
        <dbReference type="ChEBI" id="CHEBI:18248"/>
    </ligandPart>
</feature>
<feature type="binding site" evidence="2">
    <location>
        <position position="201"/>
    </location>
    <ligand>
        <name>a ubiquinone</name>
        <dbReference type="ChEBI" id="CHEBI:16389"/>
    </ligand>
</feature>
<dbReference type="EMBL" id="DQ109001">
    <property type="protein sequence ID" value="AAZ92431.1"/>
    <property type="molecule type" value="Genomic_DNA"/>
</dbReference>
<dbReference type="EMBL" id="DQ109002">
    <property type="protein sequence ID" value="AAZ92432.1"/>
    <property type="molecule type" value="Genomic_DNA"/>
</dbReference>
<dbReference type="EMBL" id="DQ109003">
    <property type="protein sequence ID" value="AAZ92433.1"/>
    <property type="molecule type" value="Genomic_DNA"/>
</dbReference>
<dbReference type="EMBL" id="DQ234899">
    <property type="protein sequence ID" value="ABB80448.1"/>
    <property type="molecule type" value="Genomic_DNA"/>
</dbReference>
<dbReference type="SMR" id="Q20FQ2"/>
<dbReference type="GO" id="GO:0005743">
    <property type="term" value="C:mitochondrial inner membrane"/>
    <property type="evidence" value="ECO:0007669"/>
    <property type="project" value="UniProtKB-SubCell"/>
</dbReference>
<dbReference type="GO" id="GO:0045275">
    <property type="term" value="C:respiratory chain complex III"/>
    <property type="evidence" value="ECO:0007669"/>
    <property type="project" value="InterPro"/>
</dbReference>
<dbReference type="GO" id="GO:0046872">
    <property type="term" value="F:metal ion binding"/>
    <property type="evidence" value="ECO:0007669"/>
    <property type="project" value="UniProtKB-KW"/>
</dbReference>
<dbReference type="GO" id="GO:0008121">
    <property type="term" value="F:ubiquinol-cytochrome-c reductase activity"/>
    <property type="evidence" value="ECO:0007669"/>
    <property type="project" value="InterPro"/>
</dbReference>
<dbReference type="GO" id="GO:0006122">
    <property type="term" value="P:mitochondrial electron transport, ubiquinol to cytochrome c"/>
    <property type="evidence" value="ECO:0007669"/>
    <property type="project" value="TreeGrafter"/>
</dbReference>
<dbReference type="CDD" id="cd00290">
    <property type="entry name" value="cytochrome_b_C"/>
    <property type="match status" value="1"/>
</dbReference>
<dbReference type="CDD" id="cd00284">
    <property type="entry name" value="Cytochrome_b_N"/>
    <property type="match status" value="1"/>
</dbReference>
<dbReference type="FunFam" id="1.20.810.10:FF:000002">
    <property type="entry name" value="Cytochrome b"/>
    <property type="match status" value="1"/>
</dbReference>
<dbReference type="Gene3D" id="1.20.810.10">
    <property type="entry name" value="Cytochrome Bc1 Complex, Chain C"/>
    <property type="match status" value="1"/>
</dbReference>
<dbReference type="InterPro" id="IPR005798">
    <property type="entry name" value="Cyt_b/b6_C"/>
</dbReference>
<dbReference type="InterPro" id="IPR036150">
    <property type="entry name" value="Cyt_b/b6_C_sf"/>
</dbReference>
<dbReference type="InterPro" id="IPR005797">
    <property type="entry name" value="Cyt_b/b6_N"/>
</dbReference>
<dbReference type="InterPro" id="IPR027387">
    <property type="entry name" value="Cytb/b6-like_sf"/>
</dbReference>
<dbReference type="InterPro" id="IPR030689">
    <property type="entry name" value="Cytochrome_b"/>
</dbReference>
<dbReference type="InterPro" id="IPR048260">
    <property type="entry name" value="Cytochrome_b_C_euk/bac"/>
</dbReference>
<dbReference type="InterPro" id="IPR048259">
    <property type="entry name" value="Cytochrome_b_N_euk/bac"/>
</dbReference>
<dbReference type="InterPro" id="IPR016174">
    <property type="entry name" value="Di-haem_cyt_TM"/>
</dbReference>
<dbReference type="PANTHER" id="PTHR19271">
    <property type="entry name" value="CYTOCHROME B"/>
    <property type="match status" value="1"/>
</dbReference>
<dbReference type="PANTHER" id="PTHR19271:SF16">
    <property type="entry name" value="CYTOCHROME B"/>
    <property type="match status" value="1"/>
</dbReference>
<dbReference type="Pfam" id="PF00032">
    <property type="entry name" value="Cytochrom_B_C"/>
    <property type="match status" value="1"/>
</dbReference>
<dbReference type="Pfam" id="PF00033">
    <property type="entry name" value="Cytochrome_B"/>
    <property type="match status" value="1"/>
</dbReference>
<dbReference type="PIRSF" id="PIRSF038885">
    <property type="entry name" value="COB"/>
    <property type="match status" value="1"/>
</dbReference>
<dbReference type="SUPFAM" id="SSF81648">
    <property type="entry name" value="a domain/subunit of cytochrome bc1 complex (Ubiquinol-cytochrome c reductase)"/>
    <property type="match status" value="1"/>
</dbReference>
<dbReference type="SUPFAM" id="SSF81342">
    <property type="entry name" value="Transmembrane di-heme cytochromes"/>
    <property type="match status" value="1"/>
</dbReference>
<dbReference type="PROSITE" id="PS51003">
    <property type="entry name" value="CYTB_CTER"/>
    <property type="match status" value="1"/>
</dbReference>
<dbReference type="PROSITE" id="PS51002">
    <property type="entry name" value="CYTB_NTER"/>
    <property type="match status" value="1"/>
</dbReference>
<sequence>MTNIRKTHPLMKIINNSLIDLPAPSNISSLWNFGSLLGACLTIQIITGLFLAMHYTADTTTAFSSVTHICRDVNYGWTIRYLHANGASLFFLCLFIHVGRGLYYGSFVLLETWNIGIMLLFSVMATAFMGYVLPWGQMSFWGATVITNLLSAIPYVGTDLVEWIWGGFSVSKPTLTRFFALHFILPFIISALTMIHLLFLHETGSNNPLGMSSNPDKIPFHPYYTTKDFLGLLLLILLLMTLTLFYPDLLGDPDNYTPANPLNTPPHIKPEWYFLFAYAILRSIPNKLGGVVALIMSILILAIMPFLQPNKQQTMMFRPLSQFLFWILVADLLTLTWIGGQPVENPFINIGQMASILYFSLMVFIMPMTCLVENKMLKW</sequence>
<comment type="function">
    <text evidence="2">Component of the ubiquinol-cytochrome c reductase complex (complex III or cytochrome b-c1 complex) that is part of the mitochondrial respiratory chain. The b-c1 complex mediates electron transfer from ubiquinol to cytochrome c. Contributes to the generation of a proton gradient across the mitochondrial membrane that is then used for ATP synthesis.</text>
</comment>
<comment type="cofactor">
    <cofactor evidence="2">
        <name>heme b</name>
        <dbReference type="ChEBI" id="CHEBI:60344"/>
    </cofactor>
    <text evidence="2">Binds 2 heme b groups non-covalently.</text>
</comment>
<comment type="subunit">
    <text evidence="2">The cytochrome bc1 complex contains 11 subunits: 3 respiratory subunits (MT-CYB, CYC1 and UQCRFS1), 2 core proteins (UQCRC1 and UQCRC2) and 6 low-molecular weight proteins (UQCRH/QCR6, UQCRB/QCR7, UQCRQ/QCR8, UQCR10/QCR9, UQCR11/QCR10 and a cleavage product of UQCRFS1). This cytochrome bc1 complex then forms a dimer.</text>
</comment>
<comment type="subcellular location">
    <subcellularLocation>
        <location evidence="2">Mitochondrion inner membrane</location>
        <topology evidence="2">Multi-pass membrane protein</topology>
    </subcellularLocation>
</comment>
<comment type="miscellaneous">
    <text evidence="1">Heme 1 (or BL or b562) is low-potential and absorbs at about 562 nm, and heme 2 (or BH or b566) is high-potential and absorbs at about 566 nm.</text>
</comment>
<comment type="similarity">
    <text evidence="3 4">Belongs to the cytochrome b family.</text>
</comment>
<comment type="caution">
    <text evidence="2">The full-length protein contains only eight transmembrane helices, not nine as predicted by bioinformatics tools.</text>
</comment>
<geneLocation type="mitochondrion"/>
<reference key="1">
    <citation type="journal article" date="2006" name="BMC Evol. Biol.">
        <title>Molecular phylogeny and taxonomic revision of the sportive lemurs (Lepilemur, Primates).</title>
        <authorList>
            <person name="Andriaholinirina N."/>
            <person name="Fausser J.-L."/>
            <person name="Roos C."/>
            <person name="Zinner D."/>
            <person name="Thalmann U."/>
            <person name="Rabarivola C."/>
            <person name="Ravoarimanana I."/>
            <person name="Ganzhorn J.U."/>
            <person name="Meier B."/>
            <person name="Hilgartner R."/>
            <person name="Walter L."/>
            <person name="Zaramody A."/>
            <person name="Langer C."/>
            <person name="Hahn T."/>
            <person name="Zimmermann E."/>
            <person name="Radespiel U."/>
            <person name="Craul M."/>
            <person name="Tomiuk J."/>
            <person name="Tattersall I."/>
            <person name="Rumpler Y."/>
        </authorList>
    </citation>
    <scope>NUCLEOTIDE SEQUENCE [GENOMIC DNA]</scope>
</reference>
<accession>Q20FQ2</accession>
<evidence type="ECO:0000250" key="1"/>
<evidence type="ECO:0000250" key="2">
    <source>
        <dbReference type="UniProtKB" id="P00157"/>
    </source>
</evidence>
<evidence type="ECO:0000255" key="3">
    <source>
        <dbReference type="PROSITE-ProRule" id="PRU00967"/>
    </source>
</evidence>
<evidence type="ECO:0000255" key="4">
    <source>
        <dbReference type="PROSITE-ProRule" id="PRU00968"/>
    </source>
</evidence>
<organism>
    <name type="scientific">Lepilemur aeeclis</name>
    <name type="common">Sportive lemur</name>
    <dbReference type="NCBI Taxonomy" id="342399"/>
    <lineage>
        <taxon>Eukaryota</taxon>
        <taxon>Metazoa</taxon>
        <taxon>Chordata</taxon>
        <taxon>Craniata</taxon>
        <taxon>Vertebrata</taxon>
        <taxon>Euteleostomi</taxon>
        <taxon>Mammalia</taxon>
        <taxon>Eutheria</taxon>
        <taxon>Euarchontoglires</taxon>
        <taxon>Primates</taxon>
        <taxon>Strepsirrhini</taxon>
        <taxon>Lemuriformes</taxon>
        <taxon>Lepilemuridae</taxon>
        <taxon>Lepilemur</taxon>
    </lineage>
</organism>
<gene>
    <name type="primary">MT-CYB</name>
    <name type="synonym">COB</name>
    <name type="synonym">CYTB</name>
    <name type="synonym">MTCYB</name>
</gene>
<name>CYB_LEPAI</name>
<proteinExistence type="inferred from homology"/>
<protein>
    <recommendedName>
        <fullName>Cytochrome b</fullName>
    </recommendedName>
    <alternativeName>
        <fullName>Complex III subunit 3</fullName>
    </alternativeName>
    <alternativeName>
        <fullName>Complex III subunit III</fullName>
    </alternativeName>
    <alternativeName>
        <fullName>Cytochrome b-c1 complex subunit 3</fullName>
    </alternativeName>
    <alternativeName>
        <fullName>Ubiquinol-cytochrome-c reductase complex cytochrome b subunit</fullName>
    </alternativeName>
</protein>